<gene>
    <name type="primary">csgC</name>
    <name type="ordered locus">Ecok1_09370</name>
    <name type="ORF">APECO1_128</name>
</gene>
<comment type="function">
    <text evidence="1">Plays a role in the extracellular assembly of CsgA into thin aggregative fimbriae (Tafi) fibers. Assembly may also require CsgE. Tafi are thought to be assembled via an extracellular nucleation-precipitation (ENP) pathway, and possibly also via an intracellular non-CsgC-dependent pathway (By similarity).</text>
</comment>
<comment type="subcellular location">
    <subcellularLocation>
        <location evidence="1">Periplasm</location>
    </subcellularLocation>
</comment>
<comment type="similarity">
    <text evidence="3">Belongs to the CsgC/AgfC family.</text>
</comment>
<comment type="sequence caution" evidence="3">
    <conflict type="erroneous initiation">
        <sequence resource="EMBL-CDS" id="ABJ00431"/>
    </conflict>
</comment>
<dbReference type="EMBL" id="CP000468">
    <property type="protein sequence ID" value="ABJ00431.1"/>
    <property type="status" value="ALT_INIT"/>
    <property type="molecule type" value="Genomic_DNA"/>
</dbReference>
<dbReference type="RefSeq" id="WP_000992818.1">
    <property type="nucleotide sequence ID" value="NZ_CADILS010000019.1"/>
</dbReference>
<dbReference type="SMR" id="A1A9U1"/>
<dbReference type="GeneID" id="75171169"/>
<dbReference type="KEGG" id="ecv:APECO1_128"/>
<dbReference type="HOGENOM" id="CLU_152585_0_0_6"/>
<dbReference type="Proteomes" id="UP000008216">
    <property type="component" value="Chromosome"/>
</dbReference>
<dbReference type="GO" id="GO:0042597">
    <property type="term" value="C:periplasmic space"/>
    <property type="evidence" value="ECO:0007669"/>
    <property type="project" value="UniProtKB-SubCell"/>
</dbReference>
<dbReference type="Gene3D" id="2.60.40.2420">
    <property type="match status" value="1"/>
</dbReference>
<dbReference type="InterPro" id="IPR053722">
    <property type="entry name" value="Curli_assembly_CsgC/AgfC"/>
</dbReference>
<dbReference type="InterPro" id="IPR014491">
    <property type="entry name" value="Curli_production_prot_CsgC"/>
</dbReference>
<dbReference type="NCBIfam" id="NF007507">
    <property type="entry name" value="PRK10102.1"/>
    <property type="match status" value="1"/>
</dbReference>
<dbReference type="Pfam" id="PF10610">
    <property type="entry name" value="Tafi-CsgC"/>
    <property type="match status" value="1"/>
</dbReference>
<dbReference type="PIRSF" id="PIRSF018100">
    <property type="entry name" value="CsgC"/>
    <property type="match status" value="1"/>
</dbReference>
<feature type="signal peptide" evidence="2">
    <location>
        <begin position="1"/>
        <end position="8"/>
    </location>
</feature>
<feature type="chain" id="PRO_0000391678" description="Curli assembly protein CsgC">
    <location>
        <begin position="9"/>
        <end position="110"/>
    </location>
</feature>
<proteinExistence type="inferred from homology"/>
<protein>
    <recommendedName>
        <fullName>Curli assembly protein CsgC</fullName>
    </recommendedName>
</protein>
<name>CSGC_ECOK1</name>
<accession>A1A9U1</accession>
<organism>
    <name type="scientific">Escherichia coli O1:K1 / APEC</name>
    <dbReference type="NCBI Taxonomy" id="405955"/>
    <lineage>
        <taxon>Bacteria</taxon>
        <taxon>Pseudomonadati</taxon>
        <taxon>Pseudomonadota</taxon>
        <taxon>Gammaproteobacteria</taxon>
        <taxon>Enterobacterales</taxon>
        <taxon>Enterobacteriaceae</taxon>
        <taxon>Escherichia</taxon>
    </lineage>
</organism>
<evidence type="ECO:0000250" key="1"/>
<evidence type="ECO:0000255" key="2"/>
<evidence type="ECO:0000305" key="3"/>
<keyword id="KW-0143">Chaperone</keyword>
<keyword id="KW-0574">Periplasm</keyword>
<keyword id="KW-1185">Reference proteome</keyword>
<keyword id="KW-0732">Signal</keyword>
<reference key="1">
    <citation type="journal article" date="2007" name="J. Bacteriol.">
        <title>The genome sequence of avian pathogenic Escherichia coli strain O1:K1:H7 shares strong similarities with human extraintestinal pathogenic E. coli genomes.</title>
        <authorList>
            <person name="Johnson T.J."/>
            <person name="Kariyawasam S."/>
            <person name="Wannemuehler Y."/>
            <person name="Mangiamele P."/>
            <person name="Johnson S.J."/>
            <person name="Doetkott C."/>
            <person name="Skyberg J.A."/>
            <person name="Lynne A.M."/>
            <person name="Johnson J.R."/>
            <person name="Nolan L.K."/>
        </authorList>
    </citation>
    <scope>NUCLEOTIDE SEQUENCE [LARGE SCALE GENOMIC DNA]</scope>
</reference>
<sequence>MNALLLLAALSSQITFNTTQQGDMYTIIPEVTLTQSCLCRVQILSLREGSSGQSQTKQEKTLSLPANQPIALTKLSLNISPDDRVKIVVTVSDGQSLHLSQQWPPSSEKS</sequence>